<dbReference type="EC" id="4.2.1.20" evidence="1"/>
<dbReference type="EMBL" id="CP000774">
    <property type="protein sequence ID" value="ABS61766.1"/>
    <property type="molecule type" value="Genomic_DNA"/>
</dbReference>
<dbReference type="RefSeq" id="WP_011995057.1">
    <property type="nucleotide sequence ID" value="NC_009719.1"/>
</dbReference>
<dbReference type="SMR" id="A7HPD3"/>
<dbReference type="STRING" id="402881.Plav_0143"/>
<dbReference type="KEGG" id="pla:Plav_0143"/>
<dbReference type="eggNOG" id="COG0133">
    <property type="taxonomic scope" value="Bacteria"/>
</dbReference>
<dbReference type="HOGENOM" id="CLU_016734_3_1_5"/>
<dbReference type="OrthoDB" id="9766131at2"/>
<dbReference type="UniPathway" id="UPA00035">
    <property type="reaction ID" value="UER00044"/>
</dbReference>
<dbReference type="Proteomes" id="UP000006377">
    <property type="component" value="Chromosome"/>
</dbReference>
<dbReference type="GO" id="GO:0005737">
    <property type="term" value="C:cytoplasm"/>
    <property type="evidence" value="ECO:0007669"/>
    <property type="project" value="TreeGrafter"/>
</dbReference>
<dbReference type="GO" id="GO:0004834">
    <property type="term" value="F:tryptophan synthase activity"/>
    <property type="evidence" value="ECO:0007669"/>
    <property type="project" value="UniProtKB-UniRule"/>
</dbReference>
<dbReference type="CDD" id="cd06446">
    <property type="entry name" value="Trp-synth_B"/>
    <property type="match status" value="1"/>
</dbReference>
<dbReference type="FunFam" id="3.40.50.1100:FF:000001">
    <property type="entry name" value="Tryptophan synthase beta chain"/>
    <property type="match status" value="1"/>
</dbReference>
<dbReference type="FunFam" id="3.40.50.1100:FF:000004">
    <property type="entry name" value="Tryptophan synthase beta chain"/>
    <property type="match status" value="1"/>
</dbReference>
<dbReference type="Gene3D" id="3.40.50.1100">
    <property type="match status" value="2"/>
</dbReference>
<dbReference type="HAMAP" id="MF_00133">
    <property type="entry name" value="Trp_synth_beta"/>
    <property type="match status" value="1"/>
</dbReference>
<dbReference type="InterPro" id="IPR006653">
    <property type="entry name" value="Trp_synth_b_CS"/>
</dbReference>
<dbReference type="InterPro" id="IPR006654">
    <property type="entry name" value="Trp_synth_beta"/>
</dbReference>
<dbReference type="InterPro" id="IPR023026">
    <property type="entry name" value="Trp_synth_beta/beta-like"/>
</dbReference>
<dbReference type="InterPro" id="IPR001926">
    <property type="entry name" value="TrpB-like_PALP"/>
</dbReference>
<dbReference type="InterPro" id="IPR036052">
    <property type="entry name" value="TrpB-like_PALP_sf"/>
</dbReference>
<dbReference type="NCBIfam" id="TIGR00263">
    <property type="entry name" value="trpB"/>
    <property type="match status" value="1"/>
</dbReference>
<dbReference type="PANTHER" id="PTHR48077:SF3">
    <property type="entry name" value="TRYPTOPHAN SYNTHASE"/>
    <property type="match status" value="1"/>
</dbReference>
<dbReference type="PANTHER" id="PTHR48077">
    <property type="entry name" value="TRYPTOPHAN SYNTHASE-RELATED"/>
    <property type="match status" value="1"/>
</dbReference>
<dbReference type="Pfam" id="PF00291">
    <property type="entry name" value="PALP"/>
    <property type="match status" value="1"/>
</dbReference>
<dbReference type="PIRSF" id="PIRSF001413">
    <property type="entry name" value="Trp_syn_beta"/>
    <property type="match status" value="1"/>
</dbReference>
<dbReference type="SUPFAM" id="SSF53686">
    <property type="entry name" value="Tryptophan synthase beta subunit-like PLP-dependent enzymes"/>
    <property type="match status" value="1"/>
</dbReference>
<dbReference type="PROSITE" id="PS00168">
    <property type="entry name" value="TRP_SYNTHASE_BETA"/>
    <property type="match status" value="1"/>
</dbReference>
<name>TRPB_PARL1</name>
<evidence type="ECO:0000255" key="1">
    <source>
        <dbReference type="HAMAP-Rule" id="MF_00133"/>
    </source>
</evidence>
<keyword id="KW-0028">Amino-acid biosynthesis</keyword>
<keyword id="KW-0057">Aromatic amino acid biosynthesis</keyword>
<keyword id="KW-0456">Lyase</keyword>
<keyword id="KW-0663">Pyridoxal phosphate</keyword>
<keyword id="KW-1185">Reference proteome</keyword>
<keyword id="KW-0822">Tryptophan biosynthesis</keyword>
<sequence>MSVNKANSFRSGPDERGRFGIFGGRFVAETLMPLVLELDKAYAAAKADPAFQAEIDFMQRDYVGRPSPLYLAARLTEHFGGAKIYFKRDELNHTGSHKINNCLGQILLARRMGKTRIIAETGAGQHGVATATVCARFGLPCVIYMGTTDIERQKPNVFRMKLLGAEVVPVTSGTGTLKDAMNEALRDWVTNVENTYYLIGTVAGPHPYPAMVRDFQSVIGEETKKQMLEREGRLPDSLVACIGGGSNAMGLFHPFLDDPSVKIYGVEAAGHGLETGEHCASLKGGAPGVLHGNRTYLLQDDDGQIKDGHSISAGLDYPGIGPEHAWLHETGRAEYVSATDREALAAFQLCSKLEGIIPALEPAHALAFVTKIASALPKDHLMVMNMCGRGDKDVFAVADHLGVTL</sequence>
<feature type="chain" id="PRO_1000071428" description="Tryptophan synthase beta chain">
    <location>
        <begin position="1"/>
        <end position="405"/>
    </location>
</feature>
<feature type="modified residue" description="N6-(pyridoxal phosphate)lysine" evidence="1">
    <location>
        <position position="98"/>
    </location>
</feature>
<protein>
    <recommendedName>
        <fullName evidence="1">Tryptophan synthase beta chain</fullName>
        <ecNumber evidence="1">4.2.1.20</ecNumber>
    </recommendedName>
</protein>
<proteinExistence type="inferred from homology"/>
<comment type="function">
    <text evidence="1">The beta subunit is responsible for the synthesis of L-tryptophan from indole and L-serine.</text>
</comment>
<comment type="catalytic activity">
    <reaction evidence="1">
        <text>(1S,2R)-1-C-(indol-3-yl)glycerol 3-phosphate + L-serine = D-glyceraldehyde 3-phosphate + L-tryptophan + H2O</text>
        <dbReference type="Rhea" id="RHEA:10532"/>
        <dbReference type="ChEBI" id="CHEBI:15377"/>
        <dbReference type="ChEBI" id="CHEBI:33384"/>
        <dbReference type="ChEBI" id="CHEBI:57912"/>
        <dbReference type="ChEBI" id="CHEBI:58866"/>
        <dbReference type="ChEBI" id="CHEBI:59776"/>
        <dbReference type="EC" id="4.2.1.20"/>
    </reaction>
</comment>
<comment type="cofactor">
    <cofactor evidence="1">
        <name>pyridoxal 5'-phosphate</name>
        <dbReference type="ChEBI" id="CHEBI:597326"/>
    </cofactor>
</comment>
<comment type="pathway">
    <text evidence="1">Amino-acid biosynthesis; L-tryptophan biosynthesis; L-tryptophan from chorismate: step 5/5.</text>
</comment>
<comment type="subunit">
    <text evidence="1">Tetramer of two alpha and two beta chains.</text>
</comment>
<comment type="similarity">
    <text evidence="1">Belongs to the TrpB family.</text>
</comment>
<accession>A7HPD3</accession>
<reference key="1">
    <citation type="journal article" date="2011" name="Stand. Genomic Sci.">
        <title>Complete genome sequence of Parvibaculum lavamentivorans type strain (DS-1(T)).</title>
        <authorList>
            <person name="Schleheck D."/>
            <person name="Weiss M."/>
            <person name="Pitluck S."/>
            <person name="Bruce D."/>
            <person name="Land M.L."/>
            <person name="Han S."/>
            <person name="Saunders E."/>
            <person name="Tapia R."/>
            <person name="Detter C."/>
            <person name="Brettin T."/>
            <person name="Han J."/>
            <person name="Woyke T."/>
            <person name="Goodwin L."/>
            <person name="Pennacchio L."/>
            <person name="Nolan M."/>
            <person name="Cook A.M."/>
            <person name="Kjelleberg S."/>
            <person name="Thomas T."/>
        </authorList>
    </citation>
    <scope>NUCLEOTIDE SEQUENCE [LARGE SCALE GENOMIC DNA]</scope>
    <source>
        <strain>DS-1 / DSM 13023 / NCIMB 13966</strain>
    </source>
</reference>
<gene>
    <name evidence="1" type="primary">trpB</name>
    <name type="ordered locus">Plav_0143</name>
</gene>
<organism>
    <name type="scientific">Parvibaculum lavamentivorans (strain DS-1 / DSM 13023 / NCIMB 13966)</name>
    <dbReference type="NCBI Taxonomy" id="402881"/>
    <lineage>
        <taxon>Bacteria</taxon>
        <taxon>Pseudomonadati</taxon>
        <taxon>Pseudomonadota</taxon>
        <taxon>Alphaproteobacteria</taxon>
        <taxon>Hyphomicrobiales</taxon>
        <taxon>Parvibaculaceae</taxon>
        <taxon>Parvibaculum</taxon>
    </lineage>
</organism>